<accession>C3PLL5</accession>
<protein>
    <recommendedName>
        <fullName evidence="1">Endoribonuclease YbeY</fullName>
        <ecNumber evidence="1">3.1.-.-</ecNumber>
    </recommendedName>
</protein>
<evidence type="ECO:0000255" key="1">
    <source>
        <dbReference type="HAMAP-Rule" id="MF_00009"/>
    </source>
</evidence>
<reference key="1">
    <citation type="journal article" date="2009" name="BMC Genomics">
        <title>Analysis of the Rickettsia africae genome reveals that virulence acquisition in Rickettsia species may be explained by genome reduction.</title>
        <authorList>
            <person name="Fournier P.-E."/>
            <person name="El Karkouri K."/>
            <person name="Leroy Q."/>
            <person name="Robert C."/>
            <person name="Giumelli B."/>
            <person name="Renesto P."/>
            <person name="Socolovschi C."/>
            <person name="Parola P."/>
            <person name="Audic S."/>
            <person name="Raoult D."/>
        </authorList>
    </citation>
    <scope>NUCLEOTIDE SEQUENCE [LARGE SCALE GENOMIC DNA]</scope>
    <source>
        <strain>ESF-5</strain>
    </source>
</reference>
<comment type="function">
    <text evidence="1">Single strand-specific metallo-endoribonuclease involved in late-stage 70S ribosome quality control and in maturation of the 3' terminus of the 16S rRNA.</text>
</comment>
<comment type="cofactor">
    <cofactor evidence="1">
        <name>Zn(2+)</name>
        <dbReference type="ChEBI" id="CHEBI:29105"/>
    </cofactor>
    <text evidence="1">Binds 1 zinc ion.</text>
</comment>
<comment type="subcellular location">
    <subcellularLocation>
        <location evidence="1">Cytoplasm</location>
    </subcellularLocation>
</comment>
<comment type="similarity">
    <text evidence="1">Belongs to the endoribonuclease YbeY family.</text>
</comment>
<gene>
    <name evidence="1" type="primary">ybeY</name>
    <name type="ordered locus">RAF_ORF1040</name>
</gene>
<name>YBEY_RICAE</name>
<proteinExistence type="inferred from homology"/>
<feature type="chain" id="PRO_1000201744" description="Endoribonuclease YbeY">
    <location>
        <begin position="1"/>
        <end position="167"/>
    </location>
</feature>
<feature type="binding site" evidence="1">
    <location>
        <position position="131"/>
    </location>
    <ligand>
        <name>Zn(2+)</name>
        <dbReference type="ChEBI" id="CHEBI:29105"/>
        <note>catalytic</note>
    </ligand>
</feature>
<feature type="binding site" evidence="1">
    <location>
        <position position="135"/>
    </location>
    <ligand>
        <name>Zn(2+)</name>
        <dbReference type="ChEBI" id="CHEBI:29105"/>
        <note>catalytic</note>
    </ligand>
</feature>
<feature type="binding site" evidence="1">
    <location>
        <position position="141"/>
    </location>
    <ligand>
        <name>Zn(2+)</name>
        <dbReference type="ChEBI" id="CHEBI:29105"/>
        <note>catalytic</note>
    </ligand>
</feature>
<keyword id="KW-0963">Cytoplasm</keyword>
<keyword id="KW-0255">Endonuclease</keyword>
<keyword id="KW-0378">Hydrolase</keyword>
<keyword id="KW-0479">Metal-binding</keyword>
<keyword id="KW-0540">Nuclease</keyword>
<keyword id="KW-0690">Ribosome biogenesis</keyword>
<keyword id="KW-0698">rRNA processing</keyword>
<keyword id="KW-0862">Zinc</keyword>
<dbReference type="EC" id="3.1.-.-" evidence="1"/>
<dbReference type="EMBL" id="CP001612">
    <property type="protein sequence ID" value="ACP53855.1"/>
    <property type="molecule type" value="Genomic_DNA"/>
</dbReference>
<dbReference type="RefSeq" id="WP_012719993.1">
    <property type="nucleotide sequence ID" value="NC_012633.1"/>
</dbReference>
<dbReference type="SMR" id="C3PLL5"/>
<dbReference type="KEGG" id="raf:RAF_ORF1040"/>
<dbReference type="HOGENOM" id="CLU_106710_0_0_5"/>
<dbReference type="Proteomes" id="UP000002305">
    <property type="component" value="Chromosome"/>
</dbReference>
<dbReference type="GO" id="GO:0005737">
    <property type="term" value="C:cytoplasm"/>
    <property type="evidence" value="ECO:0007669"/>
    <property type="project" value="UniProtKB-SubCell"/>
</dbReference>
<dbReference type="GO" id="GO:0004222">
    <property type="term" value="F:metalloendopeptidase activity"/>
    <property type="evidence" value="ECO:0007669"/>
    <property type="project" value="InterPro"/>
</dbReference>
<dbReference type="GO" id="GO:0004521">
    <property type="term" value="F:RNA endonuclease activity"/>
    <property type="evidence" value="ECO:0007669"/>
    <property type="project" value="UniProtKB-UniRule"/>
</dbReference>
<dbReference type="GO" id="GO:0008270">
    <property type="term" value="F:zinc ion binding"/>
    <property type="evidence" value="ECO:0007669"/>
    <property type="project" value="UniProtKB-UniRule"/>
</dbReference>
<dbReference type="GO" id="GO:0006364">
    <property type="term" value="P:rRNA processing"/>
    <property type="evidence" value="ECO:0007669"/>
    <property type="project" value="UniProtKB-UniRule"/>
</dbReference>
<dbReference type="Gene3D" id="3.40.390.30">
    <property type="entry name" value="Metalloproteases ('zincins'), catalytic domain"/>
    <property type="match status" value="1"/>
</dbReference>
<dbReference type="HAMAP" id="MF_00009">
    <property type="entry name" value="Endoribonucl_YbeY"/>
    <property type="match status" value="1"/>
</dbReference>
<dbReference type="InterPro" id="IPR023091">
    <property type="entry name" value="MetalPrtase_cat_dom_sf_prd"/>
</dbReference>
<dbReference type="InterPro" id="IPR002036">
    <property type="entry name" value="YbeY"/>
</dbReference>
<dbReference type="InterPro" id="IPR020549">
    <property type="entry name" value="YbeY_CS"/>
</dbReference>
<dbReference type="NCBIfam" id="TIGR00043">
    <property type="entry name" value="rRNA maturation RNase YbeY"/>
    <property type="match status" value="1"/>
</dbReference>
<dbReference type="PANTHER" id="PTHR46986">
    <property type="entry name" value="ENDORIBONUCLEASE YBEY, CHLOROPLASTIC"/>
    <property type="match status" value="1"/>
</dbReference>
<dbReference type="PANTHER" id="PTHR46986:SF1">
    <property type="entry name" value="ENDORIBONUCLEASE YBEY, CHLOROPLASTIC"/>
    <property type="match status" value="1"/>
</dbReference>
<dbReference type="Pfam" id="PF02130">
    <property type="entry name" value="YbeY"/>
    <property type="match status" value="1"/>
</dbReference>
<dbReference type="SUPFAM" id="SSF55486">
    <property type="entry name" value="Metalloproteases ('zincins'), catalytic domain"/>
    <property type="match status" value="1"/>
</dbReference>
<dbReference type="PROSITE" id="PS01306">
    <property type="entry name" value="UPF0054"/>
    <property type="match status" value="1"/>
</dbReference>
<sequence>MINVEIVRNYNKWREYKQINKSLIKKITQNILLRFDNFSKIKQFELSILLTNAAEILTLNKQFRNIEKATNVLSFPSNELNWQDLYSKLEFLDDSDYMHLGDIAFCYEVIYNESCEQHKTFENHFIHLLIHSILHLIGFDHQNDTEANIMENLEIEILSYFGIFPPY</sequence>
<organism>
    <name type="scientific">Rickettsia africae (strain ESF-5)</name>
    <dbReference type="NCBI Taxonomy" id="347255"/>
    <lineage>
        <taxon>Bacteria</taxon>
        <taxon>Pseudomonadati</taxon>
        <taxon>Pseudomonadota</taxon>
        <taxon>Alphaproteobacteria</taxon>
        <taxon>Rickettsiales</taxon>
        <taxon>Rickettsiaceae</taxon>
        <taxon>Rickettsieae</taxon>
        <taxon>Rickettsia</taxon>
        <taxon>spotted fever group</taxon>
    </lineage>
</organism>